<keyword id="KW-0963">Cytoplasm</keyword>
<feature type="chain" id="PRO_1000050015" description="Sulfur carrier protein TusA">
    <location>
        <begin position="1"/>
        <end position="79"/>
    </location>
</feature>
<feature type="active site" description="Cysteine persulfide intermediate" evidence="1">
    <location>
        <position position="17"/>
    </location>
</feature>
<accession>A5UHK3</accession>
<gene>
    <name evidence="1" type="primary">tusA</name>
    <name type="ordered locus">CGSHiGG_06920</name>
</gene>
<organism>
    <name type="scientific">Haemophilus influenzae (strain PittGG)</name>
    <dbReference type="NCBI Taxonomy" id="374931"/>
    <lineage>
        <taxon>Bacteria</taxon>
        <taxon>Pseudomonadati</taxon>
        <taxon>Pseudomonadota</taxon>
        <taxon>Gammaproteobacteria</taxon>
        <taxon>Pasteurellales</taxon>
        <taxon>Pasteurellaceae</taxon>
        <taxon>Haemophilus</taxon>
    </lineage>
</organism>
<dbReference type="EMBL" id="CP000672">
    <property type="protein sequence ID" value="ABR00259.1"/>
    <property type="molecule type" value="Genomic_DNA"/>
</dbReference>
<dbReference type="SMR" id="A5UHK3"/>
<dbReference type="KEGG" id="hiq:CGSHiGG_06920"/>
<dbReference type="HOGENOM" id="CLU_165255_5_0_6"/>
<dbReference type="Proteomes" id="UP000001990">
    <property type="component" value="Chromosome"/>
</dbReference>
<dbReference type="GO" id="GO:0005737">
    <property type="term" value="C:cytoplasm"/>
    <property type="evidence" value="ECO:0007669"/>
    <property type="project" value="UniProtKB-SubCell"/>
</dbReference>
<dbReference type="GO" id="GO:0097163">
    <property type="term" value="F:sulfur carrier activity"/>
    <property type="evidence" value="ECO:0007669"/>
    <property type="project" value="UniProtKB-UniRule"/>
</dbReference>
<dbReference type="GO" id="GO:0002143">
    <property type="term" value="P:tRNA wobble position uridine thiolation"/>
    <property type="evidence" value="ECO:0007669"/>
    <property type="project" value="InterPro"/>
</dbReference>
<dbReference type="Gene3D" id="3.30.110.40">
    <property type="entry name" value="TusA-like domain"/>
    <property type="match status" value="1"/>
</dbReference>
<dbReference type="HAMAP" id="MF_00413">
    <property type="entry name" value="Thiourid_synth_A"/>
    <property type="match status" value="1"/>
</dbReference>
<dbReference type="InterPro" id="IPR022931">
    <property type="entry name" value="Sulphur_carrier_TusA"/>
</dbReference>
<dbReference type="InterPro" id="IPR001455">
    <property type="entry name" value="TusA-like"/>
</dbReference>
<dbReference type="InterPro" id="IPR036868">
    <property type="entry name" value="TusA-like_sf"/>
</dbReference>
<dbReference type="NCBIfam" id="NF001423">
    <property type="entry name" value="PRK00299.1"/>
    <property type="match status" value="1"/>
</dbReference>
<dbReference type="PANTHER" id="PTHR33279:SF2">
    <property type="entry name" value="SULFUR CARRIER PROTEIN TUSA"/>
    <property type="match status" value="1"/>
</dbReference>
<dbReference type="PANTHER" id="PTHR33279">
    <property type="entry name" value="SULFUR CARRIER PROTEIN YEDF-RELATED"/>
    <property type="match status" value="1"/>
</dbReference>
<dbReference type="Pfam" id="PF01206">
    <property type="entry name" value="TusA"/>
    <property type="match status" value="1"/>
</dbReference>
<dbReference type="SUPFAM" id="SSF64307">
    <property type="entry name" value="SirA-like"/>
    <property type="match status" value="1"/>
</dbReference>
<dbReference type="PROSITE" id="PS01148">
    <property type="entry name" value="UPF0033"/>
    <property type="match status" value="1"/>
</dbReference>
<proteinExistence type="inferred from homology"/>
<reference key="1">
    <citation type="journal article" date="2007" name="Genome Biol.">
        <title>Characterization and modeling of the Haemophilus influenzae core and supragenomes based on the complete genomic sequences of Rd and 12 clinical nontypeable strains.</title>
        <authorList>
            <person name="Hogg J.S."/>
            <person name="Hu F.Z."/>
            <person name="Janto B."/>
            <person name="Boissy R."/>
            <person name="Hayes J."/>
            <person name="Keefe R."/>
            <person name="Post J.C."/>
            <person name="Ehrlich G.D."/>
        </authorList>
    </citation>
    <scope>NUCLEOTIDE SEQUENCE [LARGE SCALE GENOMIC DNA]</scope>
    <source>
        <strain>PittGG</strain>
    </source>
</reference>
<sequence length="79" mass="9097">MSEISVTQTLNTLGLRCPEPVMLVRKNIRHLNDGEILLIIADDPATTRDIPSFCQFMDHTLLQSEVEKPPFKYWVKRGK</sequence>
<protein>
    <recommendedName>
        <fullName evidence="1">Sulfur carrier protein TusA</fullName>
    </recommendedName>
</protein>
<comment type="function">
    <text evidence="1">Sulfur carrier protein which probably makes part of a sulfur-relay system.</text>
</comment>
<comment type="subcellular location">
    <subcellularLocation>
        <location evidence="1">Cytoplasm</location>
    </subcellularLocation>
</comment>
<comment type="similarity">
    <text evidence="1">Belongs to the sulfur carrier protein TusA family.</text>
</comment>
<evidence type="ECO:0000255" key="1">
    <source>
        <dbReference type="HAMAP-Rule" id="MF_00413"/>
    </source>
</evidence>
<name>TUSA_HAEIG</name>